<gene>
    <name evidence="1" type="primary">moaA</name>
    <name type="ordered locus">RPA1978</name>
</gene>
<name>MOAA_RHOPA</name>
<sequence length="344" mass="37859">MTSAAITPPTTVDRPMTDPFGRTIDYLRVSITDRCDFRCVYCMAEDMTFLPRADLLTLEELDRLCSAFIAKGVRKLRLTGGEPLVRRNMMSLVRSLSRHLKTGALDELTLTTNGSQLARFAAELADCGVRRVNVSLDTLDPDEFRRITRWGDLERVLAGIDAARTAGLAVKINSVVLKGSNEDEIPSLMRWAHGLGMGLTLIEVMPLGEIGEGRIDQYVPLSLIRARLSANYTLTDLPDSTGGPARYVRVEETGGRLGFITPLTHNFCESCNRVRITCTGTIHTCLGHEDASDLRRPLRASPDDALLSAAIDQAIGSKPKGHDFIIDRRHNRPSVSRHMSVTGG</sequence>
<protein>
    <recommendedName>
        <fullName evidence="1">GTP 3',8-cyclase</fullName>
        <ecNumber evidence="1">4.1.99.22</ecNumber>
    </recommendedName>
    <alternativeName>
        <fullName evidence="1">Molybdenum cofactor biosynthesis protein A</fullName>
    </alternativeName>
</protein>
<keyword id="KW-0004">4Fe-4S</keyword>
<keyword id="KW-0342">GTP-binding</keyword>
<keyword id="KW-0408">Iron</keyword>
<keyword id="KW-0411">Iron-sulfur</keyword>
<keyword id="KW-0456">Lyase</keyword>
<keyword id="KW-0479">Metal-binding</keyword>
<keyword id="KW-0501">Molybdenum cofactor biosynthesis</keyword>
<keyword id="KW-0547">Nucleotide-binding</keyword>
<keyword id="KW-0949">S-adenosyl-L-methionine</keyword>
<accession>Q3V7S1</accession>
<dbReference type="EC" id="4.1.99.22" evidence="1"/>
<dbReference type="EMBL" id="BX572599">
    <property type="protein sequence ID" value="CAE27419.1"/>
    <property type="molecule type" value="Genomic_DNA"/>
</dbReference>
<dbReference type="RefSeq" id="WP_011157533.1">
    <property type="nucleotide sequence ID" value="NZ_CP116810.1"/>
</dbReference>
<dbReference type="SMR" id="Q3V7S1"/>
<dbReference type="STRING" id="258594.RPA1978"/>
<dbReference type="GeneID" id="66893022"/>
<dbReference type="eggNOG" id="COG2896">
    <property type="taxonomic scope" value="Bacteria"/>
</dbReference>
<dbReference type="HOGENOM" id="CLU_009273_0_1_5"/>
<dbReference type="PhylomeDB" id="Q3V7S1"/>
<dbReference type="UniPathway" id="UPA00344"/>
<dbReference type="GO" id="GO:0051539">
    <property type="term" value="F:4 iron, 4 sulfur cluster binding"/>
    <property type="evidence" value="ECO:0007669"/>
    <property type="project" value="UniProtKB-UniRule"/>
</dbReference>
<dbReference type="GO" id="GO:0061799">
    <property type="term" value="F:cyclic pyranopterin monophosphate synthase activity"/>
    <property type="evidence" value="ECO:0007669"/>
    <property type="project" value="TreeGrafter"/>
</dbReference>
<dbReference type="GO" id="GO:0061798">
    <property type="term" value="F:GTP 3',8'-cyclase activity"/>
    <property type="evidence" value="ECO:0007669"/>
    <property type="project" value="UniProtKB-UniRule"/>
</dbReference>
<dbReference type="GO" id="GO:0005525">
    <property type="term" value="F:GTP binding"/>
    <property type="evidence" value="ECO:0007669"/>
    <property type="project" value="UniProtKB-UniRule"/>
</dbReference>
<dbReference type="GO" id="GO:0046872">
    <property type="term" value="F:metal ion binding"/>
    <property type="evidence" value="ECO:0007669"/>
    <property type="project" value="UniProtKB-KW"/>
</dbReference>
<dbReference type="GO" id="GO:1904047">
    <property type="term" value="F:S-adenosyl-L-methionine binding"/>
    <property type="evidence" value="ECO:0007669"/>
    <property type="project" value="UniProtKB-UniRule"/>
</dbReference>
<dbReference type="GO" id="GO:0006777">
    <property type="term" value="P:Mo-molybdopterin cofactor biosynthetic process"/>
    <property type="evidence" value="ECO:0007669"/>
    <property type="project" value="UniProtKB-UniRule"/>
</dbReference>
<dbReference type="CDD" id="cd01335">
    <property type="entry name" value="Radical_SAM"/>
    <property type="match status" value="1"/>
</dbReference>
<dbReference type="CDD" id="cd21117">
    <property type="entry name" value="Twitch_MoaA"/>
    <property type="match status" value="1"/>
</dbReference>
<dbReference type="Gene3D" id="3.20.20.70">
    <property type="entry name" value="Aldolase class I"/>
    <property type="match status" value="1"/>
</dbReference>
<dbReference type="HAMAP" id="MF_01225_B">
    <property type="entry name" value="MoaA_B"/>
    <property type="match status" value="1"/>
</dbReference>
<dbReference type="InterPro" id="IPR013785">
    <property type="entry name" value="Aldolase_TIM"/>
</dbReference>
<dbReference type="InterPro" id="IPR006638">
    <property type="entry name" value="Elp3/MiaA/NifB-like_rSAM"/>
</dbReference>
<dbReference type="InterPro" id="IPR013483">
    <property type="entry name" value="MoaA"/>
</dbReference>
<dbReference type="InterPro" id="IPR000385">
    <property type="entry name" value="MoaA_NifB_PqqE_Fe-S-bd_CS"/>
</dbReference>
<dbReference type="InterPro" id="IPR010505">
    <property type="entry name" value="MoaA_twitch"/>
</dbReference>
<dbReference type="InterPro" id="IPR050105">
    <property type="entry name" value="MoCo_biosynth_MoaA/MoaC"/>
</dbReference>
<dbReference type="InterPro" id="IPR007197">
    <property type="entry name" value="rSAM"/>
</dbReference>
<dbReference type="NCBIfam" id="TIGR02666">
    <property type="entry name" value="moaA"/>
    <property type="match status" value="1"/>
</dbReference>
<dbReference type="PANTHER" id="PTHR22960:SF0">
    <property type="entry name" value="MOLYBDENUM COFACTOR BIOSYNTHESIS PROTEIN 1"/>
    <property type="match status" value="1"/>
</dbReference>
<dbReference type="PANTHER" id="PTHR22960">
    <property type="entry name" value="MOLYBDOPTERIN COFACTOR SYNTHESIS PROTEIN A"/>
    <property type="match status" value="1"/>
</dbReference>
<dbReference type="Pfam" id="PF13353">
    <property type="entry name" value="Fer4_12"/>
    <property type="match status" value="1"/>
</dbReference>
<dbReference type="Pfam" id="PF06463">
    <property type="entry name" value="Mob_synth_C"/>
    <property type="match status" value="1"/>
</dbReference>
<dbReference type="Pfam" id="PF04055">
    <property type="entry name" value="Radical_SAM"/>
    <property type="match status" value="1"/>
</dbReference>
<dbReference type="SFLD" id="SFLDG01383">
    <property type="entry name" value="cyclic_pyranopterin_phosphate"/>
    <property type="match status" value="1"/>
</dbReference>
<dbReference type="SFLD" id="SFLDG01216">
    <property type="entry name" value="thioether_bond_formation_requi"/>
    <property type="match status" value="1"/>
</dbReference>
<dbReference type="SMART" id="SM00729">
    <property type="entry name" value="Elp3"/>
    <property type="match status" value="1"/>
</dbReference>
<dbReference type="SUPFAM" id="SSF102114">
    <property type="entry name" value="Radical SAM enzymes"/>
    <property type="match status" value="1"/>
</dbReference>
<dbReference type="PROSITE" id="PS01305">
    <property type="entry name" value="MOAA_NIFB_PQQE"/>
    <property type="match status" value="1"/>
</dbReference>
<dbReference type="PROSITE" id="PS51918">
    <property type="entry name" value="RADICAL_SAM"/>
    <property type="match status" value="1"/>
</dbReference>
<reference key="1">
    <citation type="journal article" date="2004" name="Nat. Biotechnol.">
        <title>Complete genome sequence of the metabolically versatile photosynthetic bacterium Rhodopseudomonas palustris.</title>
        <authorList>
            <person name="Larimer F.W."/>
            <person name="Chain P."/>
            <person name="Hauser L."/>
            <person name="Lamerdin J.E."/>
            <person name="Malfatti S."/>
            <person name="Do L."/>
            <person name="Land M.L."/>
            <person name="Pelletier D.A."/>
            <person name="Beatty J.T."/>
            <person name="Lang A.S."/>
            <person name="Tabita F.R."/>
            <person name="Gibson J.L."/>
            <person name="Hanson T.E."/>
            <person name="Bobst C."/>
            <person name="Torres y Torres J.L."/>
            <person name="Peres C."/>
            <person name="Harrison F.H."/>
            <person name="Gibson J."/>
            <person name="Harwood C.S."/>
        </authorList>
    </citation>
    <scope>NUCLEOTIDE SEQUENCE [LARGE SCALE GENOMIC DNA]</scope>
    <source>
        <strain>ATCC BAA-98 / CGA009</strain>
    </source>
</reference>
<feature type="chain" id="PRO_1000054218" description="GTP 3',8-cyclase">
    <location>
        <begin position="1"/>
        <end position="344"/>
    </location>
</feature>
<feature type="domain" description="Radical SAM core" evidence="2">
    <location>
        <begin position="19"/>
        <end position="239"/>
    </location>
</feature>
<feature type="binding site" evidence="1">
    <location>
        <position position="28"/>
    </location>
    <ligand>
        <name>GTP</name>
        <dbReference type="ChEBI" id="CHEBI:37565"/>
    </ligand>
</feature>
<feature type="binding site" evidence="1">
    <location>
        <position position="35"/>
    </location>
    <ligand>
        <name>[4Fe-4S] cluster</name>
        <dbReference type="ChEBI" id="CHEBI:49883"/>
        <label>1</label>
        <note>4Fe-4S-S-AdoMet</note>
    </ligand>
</feature>
<feature type="binding site" evidence="1">
    <location>
        <position position="39"/>
    </location>
    <ligand>
        <name>[4Fe-4S] cluster</name>
        <dbReference type="ChEBI" id="CHEBI:49883"/>
        <label>1</label>
        <note>4Fe-4S-S-AdoMet</note>
    </ligand>
</feature>
<feature type="binding site" evidence="1">
    <location>
        <position position="41"/>
    </location>
    <ligand>
        <name>S-adenosyl-L-methionine</name>
        <dbReference type="ChEBI" id="CHEBI:59789"/>
    </ligand>
</feature>
<feature type="binding site" evidence="1">
    <location>
        <position position="42"/>
    </location>
    <ligand>
        <name>[4Fe-4S] cluster</name>
        <dbReference type="ChEBI" id="CHEBI:49883"/>
        <label>1</label>
        <note>4Fe-4S-S-AdoMet</note>
    </ligand>
</feature>
<feature type="binding site" evidence="1">
    <location>
        <position position="77"/>
    </location>
    <ligand>
        <name>GTP</name>
        <dbReference type="ChEBI" id="CHEBI:37565"/>
    </ligand>
</feature>
<feature type="binding site" evidence="1">
    <location>
        <position position="81"/>
    </location>
    <ligand>
        <name>S-adenosyl-L-methionine</name>
        <dbReference type="ChEBI" id="CHEBI:59789"/>
    </ligand>
</feature>
<feature type="binding site" evidence="1">
    <location>
        <position position="111"/>
    </location>
    <ligand>
        <name>GTP</name>
        <dbReference type="ChEBI" id="CHEBI:37565"/>
    </ligand>
</feature>
<feature type="binding site" evidence="1">
    <location>
        <position position="135"/>
    </location>
    <ligand>
        <name>S-adenosyl-L-methionine</name>
        <dbReference type="ChEBI" id="CHEBI:59789"/>
    </ligand>
</feature>
<feature type="binding site" evidence="1">
    <location>
        <position position="171"/>
    </location>
    <ligand>
        <name>GTP</name>
        <dbReference type="ChEBI" id="CHEBI:37565"/>
    </ligand>
</feature>
<feature type="binding site" evidence="1">
    <location>
        <position position="205"/>
    </location>
    <ligand>
        <name>S-adenosyl-L-methionine</name>
        <dbReference type="ChEBI" id="CHEBI:59789"/>
    </ligand>
</feature>
<feature type="binding site" evidence="1">
    <location>
        <position position="268"/>
    </location>
    <ligand>
        <name>[4Fe-4S] cluster</name>
        <dbReference type="ChEBI" id="CHEBI:49883"/>
        <label>2</label>
        <note>4Fe-4S-substrate</note>
    </ligand>
</feature>
<feature type="binding site" evidence="1">
    <location>
        <position position="271"/>
    </location>
    <ligand>
        <name>[4Fe-4S] cluster</name>
        <dbReference type="ChEBI" id="CHEBI:49883"/>
        <label>2</label>
        <note>4Fe-4S-substrate</note>
    </ligand>
</feature>
<feature type="binding site" evidence="1">
    <location>
        <begin position="273"/>
        <end position="275"/>
    </location>
    <ligand>
        <name>GTP</name>
        <dbReference type="ChEBI" id="CHEBI:37565"/>
    </ligand>
</feature>
<feature type="binding site" evidence="1">
    <location>
        <position position="285"/>
    </location>
    <ligand>
        <name>[4Fe-4S] cluster</name>
        <dbReference type="ChEBI" id="CHEBI:49883"/>
        <label>2</label>
        <note>4Fe-4S-substrate</note>
    </ligand>
</feature>
<evidence type="ECO:0000255" key="1">
    <source>
        <dbReference type="HAMAP-Rule" id="MF_01225"/>
    </source>
</evidence>
<evidence type="ECO:0000255" key="2">
    <source>
        <dbReference type="PROSITE-ProRule" id="PRU01266"/>
    </source>
</evidence>
<organism>
    <name type="scientific">Rhodopseudomonas palustris (strain ATCC BAA-98 / CGA009)</name>
    <dbReference type="NCBI Taxonomy" id="258594"/>
    <lineage>
        <taxon>Bacteria</taxon>
        <taxon>Pseudomonadati</taxon>
        <taxon>Pseudomonadota</taxon>
        <taxon>Alphaproteobacteria</taxon>
        <taxon>Hyphomicrobiales</taxon>
        <taxon>Nitrobacteraceae</taxon>
        <taxon>Rhodopseudomonas</taxon>
    </lineage>
</organism>
<comment type="function">
    <text evidence="1">Catalyzes the cyclization of GTP to (8S)-3',8-cyclo-7,8-dihydroguanosine 5'-triphosphate.</text>
</comment>
<comment type="catalytic activity">
    <reaction evidence="1">
        <text>GTP + AH2 + S-adenosyl-L-methionine = (8S)-3',8-cyclo-7,8-dihydroguanosine 5'-triphosphate + 5'-deoxyadenosine + L-methionine + A + H(+)</text>
        <dbReference type="Rhea" id="RHEA:49576"/>
        <dbReference type="ChEBI" id="CHEBI:13193"/>
        <dbReference type="ChEBI" id="CHEBI:15378"/>
        <dbReference type="ChEBI" id="CHEBI:17319"/>
        <dbReference type="ChEBI" id="CHEBI:17499"/>
        <dbReference type="ChEBI" id="CHEBI:37565"/>
        <dbReference type="ChEBI" id="CHEBI:57844"/>
        <dbReference type="ChEBI" id="CHEBI:59789"/>
        <dbReference type="ChEBI" id="CHEBI:131766"/>
        <dbReference type="EC" id="4.1.99.22"/>
    </reaction>
</comment>
<comment type="cofactor">
    <cofactor evidence="1">
        <name>[4Fe-4S] cluster</name>
        <dbReference type="ChEBI" id="CHEBI:49883"/>
    </cofactor>
    <text evidence="1">Binds 2 [4Fe-4S] clusters. Binds 1 [4Fe-4S] cluster coordinated with 3 cysteines and an exchangeable S-adenosyl-L-methionine and 1 [4Fe-4S] cluster coordinated with 3 cysteines and the GTP-derived substrate.</text>
</comment>
<comment type="pathway">
    <text evidence="1">Cofactor biosynthesis; molybdopterin biosynthesis.</text>
</comment>
<comment type="subunit">
    <text evidence="1">Monomer and homodimer.</text>
</comment>
<comment type="similarity">
    <text evidence="1">Belongs to the radical SAM superfamily. MoaA family.</text>
</comment>
<proteinExistence type="inferred from homology"/>